<sequence length="30" mass="3513">XTLSEPEPTCSIEYFRYQAIEDCEYSISVK</sequence>
<reference evidence="4" key="1">
    <citation type="journal article" date="1998" name="Thromb. Haemost.">
        <title>Fibrino(geno)lytic properties of purified hementerin, a metalloproteinase from the leech Haementeria depressa.</title>
        <authorList>
            <person name="Chudzinski-Tavassi A.M."/>
            <person name="Kelen E.M."/>
            <person name="de Paula Rosa A.P."/>
            <person name="Loyau S."/>
            <person name="Sampaio C.A."/>
            <person name="Bon C."/>
            <person name="Angles-Cano E."/>
        </authorList>
    </citation>
    <scope>PROTEIN SEQUENCE</scope>
    <scope>FUNCTION</scope>
    <scope>COFACTOR</scope>
    <scope>ACTIVITY REGULATION</scope>
    <source>
        <tissue evidence="2">Salivary gland</tissue>
    </source>
</reference>
<reference evidence="4" key="2">
    <citation type="journal article" date="2003" name="Biol. Chem.">
        <title>Nitridergic platelet pathway activation by hementerin, a metalloprotease from the leech Haementeria depressa.</title>
        <authorList>
            <person name="Chudzinski-Tavassi A.M."/>
            <person name="Bermej E."/>
            <person name="Rosenstein R.E."/>
            <person name="Faria F."/>
            <person name="Sarmiento M.I."/>
            <person name="Alberto F."/>
            <person name="Sampaio M.U."/>
            <person name="Lazzari M.A."/>
        </authorList>
    </citation>
    <scope>FUNCTION</scope>
</reference>
<proteinExistence type="evidence at protein level"/>
<comment type="function">
    <text evidence="1 2">Cleaves fibrinogen Aalpha (FGA), gamma (FGG) and Bbeta (FGB) chains. Degrades cross-linked fibrin. Has no amidolytic, plasminogenolytic or caseinolytic activity. Inhibits platelet aggregation induced by collagen (IC(50)=7.5ug/ml) and various other agonists, presumably via activation of a nitridergic pathway. Inhibition is accompanied by reduced ATP release from and surface expression of SELP and CD63 on platelets as well as increased intracellular levels of Ca(2+), cGMP and nitric oxide synthase activity.</text>
</comment>
<comment type="cofactor">
    <cofactor evidence="2">
        <name>Ca(2+)</name>
        <dbReference type="ChEBI" id="CHEBI:29108"/>
    </cofactor>
</comment>
<comment type="activity regulation">
    <text evidence="2">Fibrino(geno)lytic activity inhibited by EDTA but not by PMSF, E-64, 6-AHA and aprotinin.</text>
</comment>
<comment type="subcellular location">
    <subcellularLocation>
        <location evidence="4">Secreted</location>
    </subcellularLocation>
</comment>
<comment type="caution">
    <text evidence="2">The order of the peptides shown is unknown.</text>
</comment>
<evidence type="ECO:0000269" key="1">
    <source>
    </source>
</evidence>
<evidence type="ECO:0000269" key="2">
    <source>
    </source>
</evidence>
<evidence type="ECO:0000303" key="3">
    <source>
    </source>
</evidence>
<evidence type="ECO:0000305" key="4"/>
<accession>P86682</accession>
<dbReference type="EC" id="3.4.-.-"/>
<dbReference type="GO" id="GO:0005576">
    <property type="term" value="C:extracellular region"/>
    <property type="evidence" value="ECO:0007669"/>
    <property type="project" value="UniProtKB-SubCell"/>
</dbReference>
<dbReference type="GO" id="GO:0008237">
    <property type="term" value="F:metallopeptidase activity"/>
    <property type="evidence" value="ECO:0007669"/>
    <property type="project" value="UniProtKB-KW"/>
</dbReference>
<dbReference type="GO" id="GO:0090729">
    <property type="term" value="F:toxin activity"/>
    <property type="evidence" value="ECO:0007669"/>
    <property type="project" value="UniProtKB-KW"/>
</dbReference>
<dbReference type="GO" id="GO:0006508">
    <property type="term" value="P:proteolysis"/>
    <property type="evidence" value="ECO:0007669"/>
    <property type="project" value="UniProtKB-KW"/>
</dbReference>
<protein>
    <recommendedName>
        <fullName evidence="3">Hementerin</fullName>
        <ecNumber>3.4.-.-</ecNumber>
    </recommendedName>
</protein>
<feature type="chain" id="PRO_0000397938" description="Hementerin">
    <location>
        <begin position="1"/>
        <end position="30" status="greater than"/>
    </location>
</feature>
<feature type="non-consecutive residues" evidence="3">
    <location>
        <begin position="9"/>
        <end position="10"/>
    </location>
</feature>
<feature type="non-consecutive residues" evidence="3">
    <location>
        <begin position="16"/>
        <end position="17"/>
    </location>
</feature>
<feature type="non-terminal residue" evidence="3">
    <location>
        <position position="30"/>
    </location>
</feature>
<organism>
    <name type="scientific">Haementeria depressa</name>
    <name type="common">Leech</name>
    <dbReference type="NCBI Taxonomy" id="279730"/>
    <lineage>
        <taxon>Eukaryota</taxon>
        <taxon>Metazoa</taxon>
        <taxon>Spiralia</taxon>
        <taxon>Lophotrochozoa</taxon>
        <taxon>Annelida</taxon>
        <taxon>Clitellata</taxon>
        <taxon>Hirudinea</taxon>
        <taxon>Rhynchobdellida</taxon>
        <taxon>Glossiphoniidae</taxon>
        <taxon>Haementeria</taxon>
    </lineage>
</organism>
<name>HETN_HAEDE</name>
<keyword id="KW-0106">Calcium</keyword>
<keyword id="KW-0903">Direct protein sequencing</keyword>
<keyword id="KW-1206">Fibrinogenolytic toxin</keyword>
<keyword id="KW-1205">Fibrinolytic toxin</keyword>
<keyword id="KW-1199">Hemostasis impairing toxin</keyword>
<keyword id="KW-0378">Hydrolase</keyword>
<keyword id="KW-0482">Metalloprotease</keyword>
<keyword id="KW-1201">Platelet aggregation inhibiting toxin</keyword>
<keyword id="KW-0645">Protease</keyword>
<keyword id="KW-0964">Secreted</keyword>
<keyword id="KW-0800">Toxin</keyword>